<protein>
    <recommendedName>
        <fullName evidence="1">Photosystem II protein D1</fullName>
        <shortName evidence="1">PSII D1 protein</shortName>
        <ecNumber evidence="1">1.10.3.9</ecNumber>
    </recommendedName>
    <alternativeName>
        <fullName evidence="1">Photosystem II Q(B) protein</fullName>
    </alternativeName>
</protein>
<reference key="1">
    <citation type="journal article" date="1983" name="Nucleic Acids Res.">
        <title>Nucleotide sequence of soybean chloroplast DNA regions which contain the psb A and trn H genes and cover the ends of the large single copy region and one end of the inverted repeats.</title>
        <authorList>
            <person name="Spielmann A."/>
            <person name="Stutz E."/>
        </authorList>
    </citation>
    <scope>NUCLEOTIDE SEQUENCE [GENOMIC DNA]</scope>
</reference>
<reference key="2">
    <citation type="journal article" date="2005" name="Plant Mol. Biol.">
        <title>Complete chloroplast genome sequence of Glycine max and comparative analyses with other legume genomes.</title>
        <authorList>
            <person name="Saski C."/>
            <person name="Lee S.-B."/>
            <person name="Daniell H."/>
            <person name="Wood T.C."/>
            <person name="Tomkins J."/>
            <person name="Kim H.-G."/>
            <person name="Jansen R.K."/>
        </authorList>
    </citation>
    <scope>NUCLEOTIDE SEQUENCE [LARGE SCALE GENOMIC DNA]</scope>
    <source>
        <strain>cv. PI 437654</strain>
    </source>
</reference>
<gene>
    <name evidence="1" type="primary">psbA</name>
</gene>
<feature type="initiator methionine" description="Removed" evidence="1">
    <location>
        <position position="1"/>
    </location>
</feature>
<feature type="chain" id="PRO_0000090471" description="Photosystem II protein D1" evidence="1">
    <location>
        <begin position="2"/>
        <end position="344"/>
    </location>
</feature>
<feature type="propeptide" id="PRO_0000316453" evidence="1">
    <location>
        <begin position="345"/>
        <end position="353"/>
    </location>
</feature>
<feature type="transmembrane region" description="Helical" evidence="1">
    <location>
        <begin position="29"/>
        <end position="46"/>
    </location>
</feature>
<feature type="transmembrane region" description="Helical" evidence="1">
    <location>
        <begin position="118"/>
        <end position="133"/>
    </location>
</feature>
<feature type="transmembrane region" description="Helical" evidence="1">
    <location>
        <begin position="142"/>
        <end position="156"/>
    </location>
</feature>
<feature type="transmembrane region" description="Helical" evidence="1">
    <location>
        <begin position="197"/>
        <end position="218"/>
    </location>
</feature>
<feature type="transmembrane region" description="Helical" evidence="1">
    <location>
        <begin position="274"/>
        <end position="288"/>
    </location>
</feature>
<feature type="binding site" description="axial binding residue" evidence="1">
    <location>
        <position position="118"/>
    </location>
    <ligand>
        <name>chlorophyll a</name>
        <dbReference type="ChEBI" id="CHEBI:58416"/>
        <label>ChlzD1</label>
    </ligand>
    <ligandPart>
        <name>Mg</name>
        <dbReference type="ChEBI" id="CHEBI:25107"/>
    </ligandPart>
</feature>
<feature type="binding site" evidence="1">
    <location>
        <position position="126"/>
    </location>
    <ligand>
        <name>pheophytin a</name>
        <dbReference type="ChEBI" id="CHEBI:136840"/>
        <label>D1</label>
    </ligand>
</feature>
<feature type="binding site" evidence="1">
    <location>
        <position position="170"/>
    </location>
    <ligand>
        <name>[CaMn4O5] cluster</name>
        <dbReference type="ChEBI" id="CHEBI:189552"/>
    </ligand>
</feature>
<feature type="binding site" evidence="1">
    <location>
        <position position="189"/>
    </location>
    <ligand>
        <name>[CaMn4O5] cluster</name>
        <dbReference type="ChEBI" id="CHEBI:189552"/>
    </ligand>
</feature>
<feature type="binding site" description="axial binding residue" evidence="1">
    <location>
        <position position="198"/>
    </location>
    <ligand>
        <name>chlorophyll a</name>
        <dbReference type="ChEBI" id="CHEBI:58416"/>
        <label>PD1</label>
    </ligand>
    <ligandPart>
        <name>Mg</name>
        <dbReference type="ChEBI" id="CHEBI:25107"/>
    </ligandPart>
</feature>
<feature type="binding site" evidence="1">
    <location>
        <position position="215"/>
    </location>
    <ligand>
        <name>a quinone</name>
        <dbReference type="ChEBI" id="CHEBI:132124"/>
        <label>B</label>
    </ligand>
</feature>
<feature type="binding site" evidence="1">
    <location>
        <position position="215"/>
    </location>
    <ligand>
        <name>Fe cation</name>
        <dbReference type="ChEBI" id="CHEBI:24875"/>
        <note>ligand shared with heterodimeric partner</note>
    </ligand>
</feature>
<feature type="binding site" evidence="1">
    <location>
        <begin position="264"/>
        <end position="265"/>
    </location>
    <ligand>
        <name>a quinone</name>
        <dbReference type="ChEBI" id="CHEBI:132124"/>
        <label>B</label>
    </ligand>
</feature>
<feature type="binding site" evidence="1">
    <location>
        <position position="272"/>
    </location>
    <ligand>
        <name>Fe cation</name>
        <dbReference type="ChEBI" id="CHEBI:24875"/>
        <note>ligand shared with heterodimeric partner</note>
    </ligand>
</feature>
<feature type="binding site" evidence="1">
    <location>
        <position position="332"/>
    </location>
    <ligand>
        <name>[CaMn4O5] cluster</name>
        <dbReference type="ChEBI" id="CHEBI:189552"/>
    </ligand>
</feature>
<feature type="binding site" evidence="1">
    <location>
        <position position="333"/>
    </location>
    <ligand>
        <name>[CaMn4O5] cluster</name>
        <dbReference type="ChEBI" id="CHEBI:189552"/>
    </ligand>
</feature>
<feature type="binding site" evidence="1">
    <location>
        <position position="342"/>
    </location>
    <ligand>
        <name>[CaMn4O5] cluster</name>
        <dbReference type="ChEBI" id="CHEBI:189552"/>
    </ligand>
</feature>
<feature type="binding site" evidence="1">
    <location>
        <position position="344"/>
    </location>
    <ligand>
        <name>[CaMn4O5] cluster</name>
        <dbReference type="ChEBI" id="CHEBI:189552"/>
    </ligand>
</feature>
<feature type="site" description="Tyrosine radical intermediate" evidence="1">
    <location>
        <position position="161"/>
    </location>
</feature>
<feature type="site" description="Stabilizes free radical intermediate" evidence="1">
    <location>
        <position position="190"/>
    </location>
</feature>
<feature type="site" description="Cleavage; by CTPA" evidence="1">
    <location>
        <begin position="344"/>
        <end position="345"/>
    </location>
</feature>
<feature type="modified residue" description="N-acetylthreonine" evidence="1">
    <location>
        <position position="2"/>
    </location>
</feature>
<feature type="modified residue" description="Phosphothreonine" evidence="1">
    <location>
        <position position="2"/>
    </location>
</feature>
<proteinExistence type="inferred from homology"/>
<geneLocation type="chloroplast"/>
<keyword id="KW-0007">Acetylation</keyword>
<keyword id="KW-0106">Calcium</keyword>
<keyword id="KW-0148">Chlorophyll</keyword>
<keyword id="KW-0150">Chloroplast</keyword>
<keyword id="KW-0157">Chromophore</keyword>
<keyword id="KW-0249">Electron transport</keyword>
<keyword id="KW-0359">Herbicide resistance</keyword>
<keyword id="KW-0408">Iron</keyword>
<keyword id="KW-0460">Magnesium</keyword>
<keyword id="KW-0464">Manganese</keyword>
<keyword id="KW-0472">Membrane</keyword>
<keyword id="KW-0479">Metal-binding</keyword>
<keyword id="KW-0560">Oxidoreductase</keyword>
<keyword id="KW-0597">Phosphoprotein</keyword>
<keyword id="KW-0602">Photosynthesis</keyword>
<keyword id="KW-0604">Photosystem II</keyword>
<keyword id="KW-0934">Plastid</keyword>
<keyword id="KW-1185">Reference proteome</keyword>
<keyword id="KW-0793">Thylakoid</keyword>
<keyword id="KW-0812">Transmembrane</keyword>
<keyword id="KW-1133">Transmembrane helix</keyword>
<keyword id="KW-0813">Transport</keyword>
<sequence length="353" mass="38949">MTAILERRESESLWGRFCNWITSTENRLYIGWFGVLMIPTLLTATSVFIIAFIAAPPVDIDGIREPVSGSLLYGNNIISGAIIPTSAAIGLHFYPIWEAASVDEWLYNGGPYELIVLHFLLGVACYMGREWELSFRLGMRPWIAVAYSAPVAAATAVFLIYPIGQGSFSDGMPLGISGTFNFMIVFQAEHNILMHPFHMLGVAGVFGGSLFSAMHGSLVTSSLIRETTENESANEGYRFGQEEETYNIVAAHGYFGRLIFQYASFNNSRSLHFFLAAWPVVGIWFTALGISTMAFNLNGFNFNQSVVDSQGRVINTWADIINRANLGMEVMHERNAHNFPLDLAAIDAPSING</sequence>
<dbReference type="EC" id="1.10.3.9" evidence="1"/>
<dbReference type="EMBL" id="X00152">
    <property type="protein sequence ID" value="CAA24986.1"/>
    <property type="molecule type" value="Genomic_DNA"/>
</dbReference>
<dbReference type="EMBL" id="L80059">
    <property type="protein sequence ID" value="AAQ67339.1"/>
    <property type="status" value="ALT_INIT"/>
    <property type="molecule type" value="Genomic_DNA"/>
</dbReference>
<dbReference type="EMBL" id="DQ317523">
    <property type="protein sequence ID" value="ABC25105.1"/>
    <property type="molecule type" value="Genomic_DNA"/>
</dbReference>
<dbReference type="PIR" id="A03460">
    <property type="entry name" value="FMSY32"/>
</dbReference>
<dbReference type="RefSeq" id="YP_538745.1">
    <property type="nucleotide sequence ID" value="NC_007942.1"/>
</dbReference>
<dbReference type="SMR" id="P02957"/>
<dbReference type="FunCoup" id="P02957">
    <property type="interactions" value="448"/>
</dbReference>
<dbReference type="STRING" id="3847.P02957"/>
<dbReference type="PaxDb" id="3847-GLYMA13G15560.1"/>
<dbReference type="GeneID" id="3989259"/>
<dbReference type="KEGG" id="gmx:3989259"/>
<dbReference type="eggNOG" id="ENOG502QR09">
    <property type="taxonomic scope" value="Eukaryota"/>
</dbReference>
<dbReference type="InParanoid" id="P02957"/>
<dbReference type="Proteomes" id="UP000008827">
    <property type="component" value="Chloroplast"/>
</dbReference>
<dbReference type="GO" id="GO:0009535">
    <property type="term" value="C:chloroplast thylakoid membrane"/>
    <property type="evidence" value="ECO:0007669"/>
    <property type="project" value="UniProtKB-SubCell"/>
</dbReference>
<dbReference type="GO" id="GO:0009523">
    <property type="term" value="C:photosystem II"/>
    <property type="evidence" value="ECO:0000318"/>
    <property type="project" value="GO_Central"/>
</dbReference>
<dbReference type="GO" id="GO:0016168">
    <property type="term" value="F:chlorophyll binding"/>
    <property type="evidence" value="ECO:0007669"/>
    <property type="project" value="UniProtKB-UniRule"/>
</dbReference>
<dbReference type="GO" id="GO:0045156">
    <property type="term" value="F:electron transporter, transferring electrons within the cyclic electron transport pathway of photosynthesis activity"/>
    <property type="evidence" value="ECO:0007669"/>
    <property type="project" value="InterPro"/>
</dbReference>
<dbReference type="GO" id="GO:0005506">
    <property type="term" value="F:iron ion binding"/>
    <property type="evidence" value="ECO:0007669"/>
    <property type="project" value="UniProtKB-UniRule"/>
</dbReference>
<dbReference type="GO" id="GO:0016682">
    <property type="term" value="F:oxidoreductase activity, acting on diphenols and related substances as donors, oxygen as acceptor"/>
    <property type="evidence" value="ECO:0007669"/>
    <property type="project" value="UniProtKB-UniRule"/>
</dbReference>
<dbReference type="GO" id="GO:0010242">
    <property type="term" value="F:oxygen evolving activity"/>
    <property type="evidence" value="ECO:0007669"/>
    <property type="project" value="UniProtKB-EC"/>
</dbReference>
<dbReference type="GO" id="GO:0009772">
    <property type="term" value="P:photosynthetic electron transport in photosystem II"/>
    <property type="evidence" value="ECO:0007669"/>
    <property type="project" value="InterPro"/>
</dbReference>
<dbReference type="GO" id="GO:0009635">
    <property type="term" value="P:response to herbicide"/>
    <property type="evidence" value="ECO:0007669"/>
    <property type="project" value="UniProtKB-KW"/>
</dbReference>
<dbReference type="CDD" id="cd09289">
    <property type="entry name" value="Photosystem-II_D1"/>
    <property type="match status" value="1"/>
</dbReference>
<dbReference type="FunFam" id="1.20.85.10:FF:000002">
    <property type="entry name" value="Photosystem II protein D1"/>
    <property type="match status" value="1"/>
</dbReference>
<dbReference type="Gene3D" id="1.20.85.10">
    <property type="entry name" value="Photosystem II protein D1-like"/>
    <property type="match status" value="1"/>
</dbReference>
<dbReference type="HAMAP" id="MF_01379">
    <property type="entry name" value="PSII_PsbA_D1"/>
    <property type="match status" value="1"/>
</dbReference>
<dbReference type="InterPro" id="IPR055266">
    <property type="entry name" value="D1/D2"/>
</dbReference>
<dbReference type="InterPro" id="IPR036854">
    <property type="entry name" value="Photo_II_D1/D2_sf"/>
</dbReference>
<dbReference type="InterPro" id="IPR000484">
    <property type="entry name" value="Photo_RC_L/M"/>
</dbReference>
<dbReference type="InterPro" id="IPR055265">
    <property type="entry name" value="Photo_RC_L/M_CS"/>
</dbReference>
<dbReference type="InterPro" id="IPR005867">
    <property type="entry name" value="PSII_D1"/>
</dbReference>
<dbReference type="NCBIfam" id="TIGR01151">
    <property type="entry name" value="psbA"/>
    <property type="match status" value="1"/>
</dbReference>
<dbReference type="PANTHER" id="PTHR33149:SF12">
    <property type="entry name" value="PHOTOSYSTEM II D2 PROTEIN"/>
    <property type="match status" value="1"/>
</dbReference>
<dbReference type="PANTHER" id="PTHR33149">
    <property type="entry name" value="PHOTOSYSTEM II PROTEIN D1"/>
    <property type="match status" value="1"/>
</dbReference>
<dbReference type="Pfam" id="PF00124">
    <property type="entry name" value="Photo_RC"/>
    <property type="match status" value="1"/>
</dbReference>
<dbReference type="PRINTS" id="PR00256">
    <property type="entry name" value="REACTNCENTRE"/>
</dbReference>
<dbReference type="SUPFAM" id="SSF81483">
    <property type="entry name" value="Bacterial photosystem II reaction centre, L and M subunits"/>
    <property type="match status" value="1"/>
</dbReference>
<dbReference type="PROSITE" id="PS00244">
    <property type="entry name" value="REACTION_CENTER"/>
    <property type="match status" value="1"/>
</dbReference>
<accession>P02957</accession>
<accession>Q2PMV3</accession>
<accession>Q6LDZ6</accession>
<evidence type="ECO:0000255" key="1">
    <source>
        <dbReference type="HAMAP-Rule" id="MF_01379"/>
    </source>
</evidence>
<evidence type="ECO:0000305" key="2"/>
<organism>
    <name type="scientific">Glycine max</name>
    <name type="common">Soybean</name>
    <name type="synonym">Glycine hispida</name>
    <dbReference type="NCBI Taxonomy" id="3847"/>
    <lineage>
        <taxon>Eukaryota</taxon>
        <taxon>Viridiplantae</taxon>
        <taxon>Streptophyta</taxon>
        <taxon>Embryophyta</taxon>
        <taxon>Tracheophyta</taxon>
        <taxon>Spermatophyta</taxon>
        <taxon>Magnoliopsida</taxon>
        <taxon>eudicotyledons</taxon>
        <taxon>Gunneridae</taxon>
        <taxon>Pentapetalae</taxon>
        <taxon>rosids</taxon>
        <taxon>fabids</taxon>
        <taxon>Fabales</taxon>
        <taxon>Fabaceae</taxon>
        <taxon>Papilionoideae</taxon>
        <taxon>50 kb inversion clade</taxon>
        <taxon>NPAAA clade</taxon>
        <taxon>indigoferoid/millettioid clade</taxon>
        <taxon>Phaseoleae</taxon>
        <taxon>Glycine</taxon>
        <taxon>Glycine subgen. Soja</taxon>
    </lineage>
</organism>
<comment type="function">
    <text evidence="1">Photosystem II (PSII) is a light-driven water:plastoquinone oxidoreductase that uses light energy to abstract electrons from H(2)O, generating O(2) and a proton gradient subsequently used for ATP formation. It consists of a core antenna complex that captures photons, and an electron transfer chain that converts photonic excitation into a charge separation. The D1/D2 (PsbA/PsbD) reaction center heterodimer binds P680, the primary electron donor of PSII as well as several subsequent electron acceptors.</text>
</comment>
<comment type="catalytic activity">
    <reaction evidence="1">
        <text>2 a plastoquinone + 4 hnu + 2 H2O = 2 a plastoquinol + O2</text>
        <dbReference type="Rhea" id="RHEA:36359"/>
        <dbReference type="Rhea" id="RHEA-COMP:9561"/>
        <dbReference type="Rhea" id="RHEA-COMP:9562"/>
        <dbReference type="ChEBI" id="CHEBI:15377"/>
        <dbReference type="ChEBI" id="CHEBI:15379"/>
        <dbReference type="ChEBI" id="CHEBI:17757"/>
        <dbReference type="ChEBI" id="CHEBI:30212"/>
        <dbReference type="ChEBI" id="CHEBI:62192"/>
        <dbReference type="EC" id="1.10.3.9"/>
    </reaction>
</comment>
<comment type="cofactor">
    <text evidence="1">The D1/D2 heterodimer binds P680, chlorophylls that are the primary electron donor of PSII, and subsequent electron acceptors. It shares a non-heme iron and each subunit binds pheophytin, quinone, additional chlorophylls, carotenoids and lipids. D1 provides most of the ligands for the Mn4-Ca-O5 cluster of the oxygen-evolving complex (OEC). There is also a Cl(-1) ion associated with D1 and D2, which is required for oxygen evolution. The PSII complex binds additional chlorophylls, carotenoids and specific lipids.</text>
</comment>
<comment type="subunit">
    <text evidence="1">PSII is composed of 1 copy each of membrane proteins PsbA, PsbB, PsbC, PsbD, PsbE, PsbF, PsbH, PsbI, PsbJ, PsbK, PsbL, PsbM, PsbT, PsbX, PsbY, PsbZ, Psb30/Ycf12, at least 3 peripheral proteins of the oxygen-evolving complex and a large number of cofactors. It forms dimeric complexes.</text>
</comment>
<comment type="subcellular location">
    <subcellularLocation>
        <location evidence="1">Plastid</location>
        <location evidence="1">Chloroplast thylakoid membrane</location>
        <topology evidence="1">Multi-pass membrane protein</topology>
    </subcellularLocation>
</comment>
<comment type="PTM">
    <text evidence="1">Tyr-161 forms a radical intermediate that is referred to as redox-active TyrZ, YZ or Y-Z.</text>
</comment>
<comment type="PTM">
    <text evidence="1">C-terminally processed by CTPA; processing is essential to allow assembly of the oxygen-evolving complex and thus photosynthetic growth.</text>
</comment>
<comment type="miscellaneous">
    <text evidence="1">2 of the reaction center chlorophylls (ChlD1 and ChlD2) are entirely coordinated by water.</text>
</comment>
<comment type="miscellaneous">
    <text evidence="1">Herbicides such as atrazine, BNT, diuron or ioxynil bind in the Q(B) binding site and block subsequent electron transfer.</text>
</comment>
<comment type="similarity">
    <text evidence="1">Belongs to the reaction center PufL/M/PsbA/D family.</text>
</comment>
<comment type="sequence caution" evidence="2">
    <conflict type="erroneous initiation">
        <sequence resource="EMBL-CDS" id="AAQ67339"/>
    </conflict>
    <text>Extended N-terminus.</text>
</comment>
<name>PSBA_SOYBN</name>